<organism>
    <name type="scientific">Homo sapiens</name>
    <name type="common">Human</name>
    <dbReference type="NCBI Taxonomy" id="9606"/>
    <lineage>
        <taxon>Eukaryota</taxon>
        <taxon>Metazoa</taxon>
        <taxon>Chordata</taxon>
        <taxon>Craniata</taxon>
        <taxon>Vertebrata</taxon>
        <taxon>Euteleostomi</taxon>
        <taxon>Mammalia</taxon>
        <taxon>Eutheria</taxon>
        <taxon>Euarchontoglires</taxon>
        <taxon>Primates</taxon>
        <taxon>Haplorrhini</taxon>
        <taxon>Catarrhini</taxon>
        <taxon>Hominidae</taxon>
        <taxon>Homo</taxon>
    </lineage>
</organism>
<name>GRAPL_HUMAN</name>
<reference key="1">
    <citation type="journal article" date="2006" name="Nature">
        <title>DNA sequence of human chromosome 17 and analysis of rearrangement in the human lineage.</title>
        <authorList>
            <person name="Zody M.C."/>
            <person name="Garber M."/>
            <person name="Adams D.J."/>
            <person name="Sharpe T."/>
            <person name="Harrow J."/>
            <person name="Lupski J.R."/>
            <person name="Nicholson C."/>
            <person name="Searle S.M."/>
            <person name="Wilming L."/>
            <person name="Young S.K."/>
            <person name="Abouelleil A."/>
            <person name="Allen N.R."/>
            <person name="Bi W."/>
            <person name="Bloom T."/>
            <person name="Borowsky M.L."/>
            <person name="Bugalter B.E."/>
            <person name="Butler J."/>
            <person name="Chang J.L."/>
            <person name="Chen C.-K."/>
            <person name="Cook A."/>
            <person name="Corum B."/>
            <person name="Cuomo C.A."/>
            <person name="de Jong P.J."/>
            <person name="DeCaprio D."/>
            <person name="Dewar K."/>
            <person name="FitzGerald M."/>
            <person name="Gilbert J."/>
            <person name="Gibson R."/>
            <person name="Gnerre S."/>
            <person name="Goldstein S."/>
            <person name="Grafham D.V."/>
            <person name="Grocock R."/>
            <person name="Hafez N."/>
            <person name="Hagopian D.S."/>
            <person name="Hart E."/>
            <person name="Norman C.H."/>
            <person name="Humphray S."/>
            <person name="Jaffe D.B."/>
            <person name="Jones M."/>
            <person name="Kamal M."/>
            <person name="Khodiyar V.K."/>
            <person name="LaButti K."/>
            <person name="Laird G."/>
            <person name="Lehoczky J."/>
            <person name="Liu X."/>
            <person name="Lokyitsang T."/>
            <person name="Loveland J."/>
            <person name="Lui A."/>
            <person name="Macdonald P."/>
            <person name="Major J.E."/>
            <person name="Matthews L."/>
            <person name="Mauceli E."/>
            <person name="McCarroll S.A."/>
            <person name="Mihalev A.H."/>
            <person name="Mudge J."/>
            <person name="Nguyen C."/>
            <person name="Nicol R."/>
            <person name="O'Leary S.B."/>
            <person name="Osoegawa K."/>
            <person name="Schwartz D.C."/>
            <person name="Shaw-Smith C."/>
            <person name="Stankiewicz P."/>
            <person name="Steward C."/>
            <person name="Swarbreck D."/>
            <person name="Venkataraman V."/>
            <person name="Whittaker C.A."/>
            <person name="Yang X."/>
            <person name="Zimmer A.R."/>
            <person name="Bradley A."/>
            <person name="Hubbard T."/>
            <person name="Birren B.W."/>
            <person name="Rogers J."/>
            <person name="Lander E.S."/>
            <person name="Nusbaum C."/>
        </authorList>
    </citation>
    <scope>NUCLEOTIDE SEQUENCE [LARGE SCALE GENOMIC DNA]</scope>
</reference>
<reference key="2">
    <citation type="journal article" date="2004" name="Genome Res.">
        <title>The status, quality, and expansion of the NIH full-length cDNA project: the Mammalian Gene Collection (MGC).</title>
        <authorList>
            <consortium name="The MGC Project Team"/>
        </authorList>
    </citation>
    <scope>NUCLEOTIDE SEQUENCE [LARGE SCALE MRNA] (ISOFORM 1)</scope>
    <scope>NUCLEOTIDE SEQUENCE [LARGE SCALE MRNA] OF 53-118 (ISOFORM 2)</scope>
    <source>
        <tissue>Lung</tissue>
    </source>
</reference>
<accession>Q8TC17</accession>
<accession>B2RXI8</accession>
<gene>
    <name type="primary">GRAPL</name>
</gene>
<comment type="interaction">
    <interactant intactId="EBI-18300553">
        <id>Q8TC17</id>
    </interactant>
    <interactant intactId="EBI-1053424">
        <id>O43741</id>
        <label>PRKAB2</label>
    </interactant>
    <organismsDiffer>false</organismsDiffer>
    <experiments>3</experiments>
</comment>
<comment type="interaction">
    <interactant intactId="EBI-18300553">
        <id>Q8TC17</id>
    </interactant>
    <interactant intactId="EBI-10226430">
        <id>Q0D2K3</id>
        <label>RIPPLY1</label>
    </interactant>
    <organismsDiffer>false</organismsDiffer>
    <experiments>3</experiments>
</comment>
<comment type="interaction">
    <interactant intactId="EBI-18300553">
        <id>Q8TC17</id>
    </interactant>
    <interactant intactId="EBI-17721485">
        <id>Q8WWU5-7</id>
        <label>TCP11</label>
    </interactant>
    <organismsDiffer>false</organismsDiffer>
    <experiments>3</experiments>
</comment>
<comment type="interaction">
    <interactant intactId="EBI-18300553">
        <id>Q8TC17</id>
    </interactant>
    <interactant intactId="EBI-7254550">
        <id>P36508</id>
        <label>ZNF76</label>
    </interactant>
    <organismsDiffer>false</organismsDiffer>
    <experiments>3</experiments>
</comment>
<comment type="alternative products">
    <event type="alternative splicing"/>
    <isoform>
        <id>Q8TC17-1</id>
        <name>1</name>
        <sequence type="displayed"/>
    </isoform>
    <isoform>
        <id>Q8TC17-2</id>
        <name>2</name>
        <sequence type="described" ref="VSP_039172"/>
    </isoform>
</comment>
<comment type="similarity">
    <text evidence="5">Belongs to the GRB2/sem-5/DRK family.</text>
</comment>
<sequence>MESVALYSFQATESDELAFNKGDTLKILNMEDDQNWYKAELRGVEGFIPKNYIRVKPHPWYSGRISRQLAEEILMKRNHLGAFLIRESESSPGEFSVSVNNRAQRGPCLGPKSHSRLG</sequence>
<feature type="chain" id="PRO_0000344236" description="GRB2-related adapter protein-like">
    <location>
        <begin position="1"/>
        <end position="118"/>
    </location>
</feature>
<feature type="domain" description="SH3" evidence="2">
    <location>
        <begin position="1"/>
        <end position="58"/>
    </location>
</feature>
<feature type="domain" description="SH2" evidence="1">
    <location>
        <begin position="60"/>
        <end position="118"/>
    </location>
</feature>
<feature type="region of interest" description="Disordered" evidence="3">
    <location>
        <begin position="89"/>
        <end position="118"/>
    </location>
</feature>
<feature type="compositionally biased region" description="Polar residues" evidence="3">
    <location>
        <begin position="90"/>
        <end position="103"/>
    </location>
</feature>
<feature type="splice variant" id="VSP_039172" description="In isoform 2." evidence="4">
    <original>NNR</original>
    <variation>K</variation>
    <location>
        <begin position="100"/>
        <end position="102"/>
    </location>
</feature>
<keyword id="KW-0025">Alternative splicing</keyword>
<keyword id="KW-1185">Reference proteome</keyword>
<keyword id="KW-0727">SH2 domain</keyword>
<keyword id="KW-0728">SH3 domain</keyword>
<dbReference type="EMBL" id="AC007952">
    <property type="status" value="NOT_ANNOTATED_CDS"/>
    <property type="molecule type" value="Genomic_DNA"/>
</dbReference>
<dbReference type="EMBL" id="BC026233">
    <property type="protein sequence ID" value="AAH26233.1"/>
    <property type="molecule type" value="mRNA"/>
</dbReference>
<dbReference type="EMBL" id="BC157869">
    <property type="protein sequence ID" value="AAI57870.1"/>
    <property type="molecule type" value="mRNA"/>
</dbReference>
<dbReference type="CCDS" id="CCDS45627.1">
    <molecule id="Q8TC17-1"/>
</dbReference>
<dbReference type="RefSeq" id="NP_001123250.1">
    <molecule id="Q8TC17-1"/>
    <property type="nucleotide sequence ID" value="NM_001129778.3"/>
</dbReference>
<dbReference type="RefSeq" id="NP_001340347.1">
    <molecule id="Q8TC17-2"/>
    <property type="nucleotide sequence ID" value="NM_001353418.2"/>
</dbReference>
<dbReference type="RefSeq" id="XP_016880126.1">
    <property type="nucleotide sequence ID" value="XM_017024637.1"/>
</dbReference>
<dbReference type="SMR" id="Q8TC17"/>
<dbReference type="BioGRID" id="134647">
    <property type="interactions" value="5"/>
</dbReference>
<dbReference type="IntAct" id="Q8TC17">
    <property type="interactions" value="5"/>
</dbReference>
<dbReference type="STRING" id="9606.ENSP00000437409"/>
<dbReference type="iPTMnet" id="Q8TC17"/>
<dbReference type="PhosphoSitePlus" id="Q8TC17"/>
<dbReference type="BioMuta" id="GRAPL"/>
<dbReference type="DMDM" id="296439331"/>
<dbReference type="jPOST" id="Q8TC17"/>
<dbReference type="MassIVE" id="Q8TC17"/>
<dbReference type="PaxDb" id="9606-ENSP00000437409"/>
<dbReference type="PeptideAtlas" id="Q8TC17"/>
<dbReference type="ProteomicsDB" id="74071">
    <molecule id="Q8TC17-1"/>
</dbReference>
<dbReference type="ProteomicsDB" id="74072">
    <molecule id="Q8TC17-2"/>
</dbReference>
<dbReference type="Antibodypedia" id="63469">
    <property type="antibodies" value="4 antibodies from 4 providers"/>
</dbReference>
<dbReference type="DNASU" id="400581"/>
<dbReference type="Ensembl" id="ENST00000344415.9">
    <molecule id="Q8TC17-1"/>
    <property type="protein sequence ID" value="ENSP00000437409.2"/>
    <property type="gene ID" value="ENSG00000189152.12"/>
</dbReference>
<dbReference type="GeneID" id="400581"/>
<dbReference type="KEGG" id="hsa:400581"/>
<dbReference type="MANE-Select" id="ENST00000344415.9">
    <property type="protein sequence ID" value="ENSP00000437409.2"/>
    <property type="RefSeq nucleotide sequence ID" value="NM_001129778.3"/>
    <property type="RefSeq protein sequence ID" value="NP_001123250.1"/>
</dbReference>
<dbReference type="UCSC" id="uc010cqk.2">
    <molecule id="Q8TC17-1"/>
    <property type="organism name" value="human"/>
</dbReference>
<dbReference type="AGR" id="HGNC:37240"/>
<dbReference type="CTD" id="400581"/>
<dbReference type="GeneCards" id="GRAPL"/>
<dbReference type="HGNC" id="HGNC:37240">
    <property type="gene designation" value="GRAPL"/>
</dbReference>
<dbReference type="HPA" id="ENSG00000189152">
    <property type="expression patterns" value="Tissue enhanced (lymphoid)"/>
</dbReference>
<dbReference type="neXtProt" id="NX_Q8TC17"/>
<dbReference type="OpenTargets" id="ENSG00000189152"/>
<dbReference type="PharmGKB" id="PA165431929"/>
<dbReference type="VEuPathDB" id="HostDB:ENSG00000189152"/>
<dbReference type="eggNOG" id="KOG3601">
    <property type="taxonomic scope" value="Eukaryota"/>
</dbReference>
<dbReference type="GeneTree" id="ENSGT00940000156254"/>
<dbReference type="InParanoid" id="Q8TC17"/>
<dbReference type="OMA" id="WANAERD"/>
<dbReference type="OrthoDB" id="10255964at2759"/>
<dbReference type="PAN-GO" id="Q8TC17">
    <property type="GO annotations" value="4 GO annotations based on evolutionary models"/>
</dbReference>
<dbReference type="PhylomeDB" id="Q8TC17"/>
<dbReference type="TreeFam" id="TF354288"/>
<dbReference type="PathwayCommons" id="Q8TC17"/>
<dbReference type="SignaLink" id="Q8TC17"/>
<dbReference type="BioGRID-ORCS" id="400581">
    <property type="hits" value="13 hits in 690 CRISPR screens"/>
</dbReference>
<dbReference type="ChiTaRS" id="GRAPL">
    <property type="organism name" value="human"/>
</dbReference>
<dbReference type="GenomeRNAi" id="400581"/>
<dbReference type="Pharos" id="Q8TC17">
    <property type="development level" value="Tdark"/>
</dbReference>
<dbReference type="PRO" id="PR:Q8TC17"/>
<dbReference type="Proteomes" id="UP000005640">
    <property type="component" value="Chromosome 17"/>
</dbReference>
<dbReference type="RNAct" id="Q8TC17">
    <property type="molecule type" value="protein"/>
</dbReference>
<dbReference type="Bgee" id="ENSG00000189152">
    <property type="expression patterns" value="Expressed in spleen and 94 other cell types or tissues"/>
</dbReference>
<dbReference type="ExpressionAtlas" id="Q8TC17">
    <property type="expression patterns" value="baseline and differential"/>
</dbReference>
<dbReference type="GO" id="GO:0005737">
    <property type="term" value="C:cytoplasm"/>
    <property type="evidence" value="ECO:0000318"/>
    <property type="project" value="GO_Central"/>
</dbReference>
<dbReference type="GO" id="GO:0005829">
    <property type="term" value="C:cytosol"/>
    <property type="evidence" value="ECO:0007669"/>
    <property type="project" value="UniProtKB-ARBA"/>
</dbReference>
<dbReference type="GO" id="GO:0030971">
    <property type="term" value="F:receptor tyrosine kinase binding"/>
    <property type="evidence" value="ECO:0000318"/>
    <property type="project" value="GO_Central"/>
</dbReference>
<dbReference type="GO" id="GO:0035591">
    <property type="term" value="F:signaling adaptor activity"/>
    <property type="evidence" value="ECO:0000318"/>
    <property type="project" value="GO_Central"/>
</dbReference>
<dbReference type="GO" id="GO:0016477">
    <property type="term" value="P:cell migration"/>
    <property type="evidence" value="ECO:0000318"/>
    <property type="project" value="GO_Central"/>
</dbReference>
<dbReference type="GO" id="GO:0007167">
    <property type="term" value="P:enzyme-linked receptor protein signaling pathway"/>
    <property type="evidence" value="ECO:0000318"/>
    <property type="project" value="GO_Central"/>
</dbReference>
<dbReference type="CDD" id="cd11948">
    <property type="entry name" value="SH3_GRAP_N"/>
    <property type="match status" value="1"/>
</dbReference>
<dbReference type="FunFam" id="2.30.30.40:FF:000076">
    <property type="entry name" value="Growth factor receptor-bound protein 2"/>
    <property type="match status" value="1"/>
</dbReference>
<dbReference type="Gene3D" id="3.30.505.10">
    <property type="entry name" value="SH2 domain"/>
    <property type="match status" value="1"/>
</dbReference>
<dbReference type="Gene3D" id="2.30.30.40">
    <property type="entry name" value="SH3 Domains"/>
    <property type="match status" value="1"/>
</dbReference>
<dbReference type="InterPro" id="IPR035645">
    <property type="entry name" value="GRAP_N_SH3"/>
</dbReference>
<dbReference type="InterPro" id="IPR043539">
    <property type="entry name" value="Grb2-like"/>
</dbReference>
<dbReference type="InterPro" id="IPR000980">
    <property type="entry name" value="SH2"/>
</dbReference>
<dbReference type="InterPro" id="IPR036860">
    <property type="entry name" value="SH2_dom_sf"/>
</dbReference>
<dbReference type="InterPro" id="IPR036028">
    <property type="entry name" value="SH3-like_dom_sf"/>
</dbReference>
<dbReference type="InterPro" id="IPR001452">
    <property type="entry name" value="SH3_domain"/>
</dbReference>
<dbReference type="PANTHER" id="PTHR46037">
    <property type="entry name" value="PROTEIN ENHANCER OF SEVENLESS 2B"/>
    <property type="match status" value="1"/>
</dbReference>
<dbReference type="Pfam" id="PF00017">
    <property type="entry name" value="SH2"/>
    <property type="match status" value="1"/>
</dbReference>
<dbReference type="Pfam" id="PF00018">
    <property type="entry name" value="SH3_1"/>
    <property type="match status" value="1"/>
</dbReference>
<dbReference type="PRINTS" id="PR00401">
    <property type="entry name" value="SH2DOMAIN"/>
</dbReference>
<dbReference type="PRINTS" id="PR00452">
    <property type="entry name" value="SH3DOMAIN"/>
</dbReference>
<dbReference type="SMART" id="SM00252">
    <property type="entry name" value="SH2"/>
    <property type="match status" value="1"/>
</dbReference>
<dbReference type="SMART" id="SM00326">
    <property type="entry name" value="SH3"/>
    <property type="match status" value="1"/>
</dbReference>
<dbReference type="SUPFAM" id="SSF50044">
    <property type="entry name" value="SH3-domain"/>
    <property type="match status" value="1"/>
</dbReference>
<dbReference type="PROSITE" id="PS50001">
    <property type="entry name" value="SH2"/>
    <property type="match status" value="1"/>
</dbReference>
<dbReference type="PROSITE" id="PS50002">
    <property type="entry name" value="SH3"/>
    <property type="match status" value="1"/>
</dbReference>
<proteinExistence type="evidence at protein level"/>
<evidence type="ECO:0000255" key="1">
    <source>
        <dbReference type="PROSITE-ProRule" id="PRU00191"/>
    </source>
</evidence>
<evidence type="ECO:0000255" key="2">
    <source>
        <dbReference type="PROSITE-ProRule" id="PRU00192"/>
    </source>
</evidence>
<evidence type="ECO:0000256" key="3">
    <source>
        <dbReference type="SAM" id="MobiDB-lite"/>
    </source>
</evidence>
<evidence type="ECO:0000303" key="4">
    <source>
    </source>
</evidence>
<evidence type="ECO:0000305" key="5"/>
<protein>
    <recommendedName>
        <fullName>GRB2-related adapter protein-like</fullName>
    </recommendedName>
</protein>